<gene>
    <name evidence="1" type="primary">dapA</name>
    <name type="ordered locus">slr0550</name>
</gene>
<sequence>MADFVSTSPFGPVLTAMVTPFNADGGVDYGVAEKLADHLITHGSDGLVVCGTTGESPTLSWEEEHELFRVVKQTVGDRGSVIAGTGSNCTREAMEATQIAAKLGVDGSLQVVPYYNKPPQEGLLAHFQAIANCAPELPLMLYNIPGRTGQSLAPETVYRLAEVENIVAIKEATGSLEQASLIRAHTPDDFAIYAGDDVLTLPLLAVGGAGVVSVASHLVGDRLQAMVQHFAQGATAQALEIHLQLIPLFKILFCATNPIPVKTALGLQGWPVGSFRPPLCALSPGHTEQLRDVLRDLALLP</sequence>
<proteinExistence type="inferred from homology"/>
<feature type="chain" id="PRO_0000103174" description="4-hydroxy-tetrahydrodipicolinate synthase">
    <location>
        <begin position="1"/>
        <end position="301"/>
    </location>
</feature>
<feature type="active site" description="Proton donor/acceptor" evidence="1">
    <location>
        <position position="142"/>
    </location>
</feature>
<feature type="active site" description="Schiff-base intermediate with substrate" evidence="1">
    <location>
        <position position="170"/>
    </location>
</feature>
<feature type="binding site" evidence="1">
    <location>
        <position position="53"/>
    </location>
    <ligand>
        <name>pyruvate</name>
        <dbReference type="ChEBI" id="CHEBI:15361"/>
    </ligand>
</feature>
<feature type="binding site" evidence="1">
    <location>
        <position position="212"/>
    </location>
    <ligand>
        <name>pyruvate</name>
        <dbReference type="ChEBI" id="CHEBI:15361"/>
    </ligand>
</feature>
<feature type="site" description="Part of a proton relay during catalysis" evidence="1">
    <location>
        <position position="52"/>
    </location>
</feature>
<feature type="site" description="Part of a proton relay during catalysis" evidence="1">
    <location>
        <position position="115"/>
    </location>
</feature>
<keyword id="KW-0028">Amino-acid biosynthesis</keyword>
<keyword id="KW-0963">Cytoplasm</keyword>
<keyword id="KW-0220">Diaminopimelate biosynthesis</keyword>
<keyword id="KW-0456">Lyase</keyword>
<keyword id="KW-0457">Lysine biosynthesis</keyword>
<keyword id="KW-1185">Reference proteome</keyword>
<keyword id="KW-0704">Schiff base</keyword>
<protein>
    <recommendedName>
        <fullName evidence="1">4-hydroxy-tetrahydrodipicolinate synthase</fullName>
        <shortName evidence="1">HTPA synthase</shortName>
        <ecNumber evidence="1">4.3.3.7</ecNumber>
    </recommendedName>
</protein>
<name>DAPA_SYNY3</name>
<organism>
    <name type="scientific">Synechocystis sp. (strain ATCC 27184 / PCC 6803 / Kazusa)</name>
    <dbReference type="NCBI Taxonomy" id="1111708"/>
    <lineage>
        <taxon>Bacteria</taxon>
        <taxon>Bacillati</taxon>
        <taxon>Cyanobacteriota</taxon>
        <taxon>Cyanophyceae</taxon>
        <taxon>Synechococcales</taxon>
        <taxon>Merismopediaceae</taxon>
        <taxon>Synechocystis</taxon>
    </lineage>
</organism>
<reference key="1">
    <citation type="journal article" date="1995" name="DNA Res.">
        <title>Sequence analysis of the genome of the unicellular cyanobacterium Synechocystis sp. strain PCC6803. I. Sequence features in the 1 Mb region from map positions 64% to 92% of the genome.</title>
        <authorList>
            <person name="Kaneko T."/>
            <person name="Tanaka A."/>
            <person name="Sato S."/>
            <person name="Kotani H."/>
            <person name="Sazuka T."/>
            <person name="Miyajima N."/>
            <person name="Sugiura M."/>
            <person name="Tabata S."/>
        </authorList>
    </citation>
    <scope>NUCLEOTIDE SEQUENCE [LARGE SCALE GENOMIC DNA]</scope>
    <source>
        <strain>ATCC 27184 / PCC 6803 / N-1</strain>
    </source>
</reference>
<reference key="2">
    <citation type="journal article" date="1996" name="DNA Res.">
        <title>Sequence analysis of the genome of the unicellular cyanobacterium Synechocystis sp. strain PCC6803. II. Sequence determination of the entire genome and assignment of potential protein-coding regions.</title>
        <authorList>
            <person name="Kaneko T."/>
            <person name="Sato S."/>
            <person name="Kotani H."/>
            <person name="Tanaka A."/>
            <person name="Asamizu E."/>
            <person name="Nakamura Y."/>
            <person name="Miyajima N."/>
            <person name="Hirosawa M."/>
            <person name="Sugiura M."/>
            <person name="Sasamoto S."/>
            <person name="Kimura T."/>
            <person name="Hosouchi T."/>
            <person name="Matsuno A."/>
            <person name="Muraki A."/>
            <person name="Nakazaki N."/>
            <person name="Naruo K."/>
            <person name="Okumura S."/>
            <person name="Shimpo S."/>
            <person name="Takeuchi C."/>
            <person name="Wada T."/>
            <person name="Watanabe A."/>
            <person name="Yamada M."/>
            <person name="Yasuda M."/>
            <person name="Tabata S."/>
        </authorList>
    </citation>
    <scope>NUCLEOTIDE SEQUENCE [LARGE SCALE GENOMIC DNA]</scope>
    <source>
        <strain>ATCC 27184 / PCC 6803 / Kazusa</strain>
    </source>
</reference>
<accession>Q55513</accession>
<comment type="function">
    <text evidence="1">Catalyzes the condensation of (S)-aspartate-beta-semialdehyde [(S)-ASA] and pyruvate to 4-hydroxy-tetrahydrodipicolinate (HTPA).</text>
</comment>
<comment type="catalytic activity">
    <reaction evidence="1">
        <text>L-aspartate 4-semialdehyde + pyruvate = (2S,4S)-4-hydroxy-2,3,4,5-tetrahydrodipicolinate + H2O + H(+)</text>
        <dbReference type="Rhea" id="RHEA:34171"/>
        <dbReference type="ChEBI" id="CHEBI:15361"/>
        <dbReference type="ChEBI" id="CHEBI:15377"/>
        <dbReference type="ChEBI" id="CHEBI:15378"/>
        <dbReference type="ChEBI" id="CHEBI:67139"/>
        <dbReference type="ChEBI" id="CHEBI:537519"/>
        <dbReference type="EC" id="4.3.3.7"/>
    </reaction>
</comment>
<comment type="pathway">
    <text evidence="1">Amino-acid biosynthesis; L-lysine biosynthesis via DAP pathway; (S)-tetrahydrodipicolinate from L-aspartate: step 3/4.</text>
</comment>
<comment type="subunit">
    <text evidence="1">Homotetramer; dimer of dimers.</text>
</comment>
<comment type="subcellular location">
    <subcellularLocation>
        <location evidence="1">Cytoplasm</location>
    </subcellularLocation>
</comment>
<comment type="similarity">
    <text evidence="1">Belongs to the DapA family.</text>
</comment>
<comment type="caution">
    <text evidence="2">Was originally thought to be a dihydrodipicolinate synthase (DHDPS), catalyzing the condensation of (S)-aspartate-beta-semialdehyde [(S)-ASA] and pyruvate to dihydrodipicolinate (DHDP). However, it was shown in E.coli that the product of the enzymatic reaction is not dihydrodipicolinate but in fact (4S)-4-hydroxy-2,3,4,5-tetrahydro-(2S)-dipicolinic acid (HTPA), and that the consecutive dehydration reaction leading to DHDP is not spontaneous but catalyzed by DapB.</text>
</comment>
<evidence type="ECO:0000255" key="1">
    <source>
        <dbReference type="HAMAP-Rule" id="MF_00418"/>
    </source>
</evidence>
<evidence type="ECO:0000305" key="2"/>
<dbReference type="EC" id="4.3.3.7" evidence="1"/>
<dbReference type="EMBL" id="BA000022">
    <property type="protein sequence ID" value="BAA10870.1"/>
    <property type="molecule type" value="Genomic_DNA"/>
</dbReference>
<dbReference type="PIR" id="S76023">
    <property type="entry name" value="S76023"/>
</dbReference>
<dbReference type="SMR" id="Q55513"/>
<dbReference type="FunCoup" id="Q55513">
    <property type="interactions" value="291"/>
</dbReference>
<dbReference type="IntAct" id="Q55513">
    <property type="interactions" value="6"/>
</dbReference>
<dbReference type="STRING" id="1148.gene:10500376"/>
<dbReference type="PaxDb" id="1148-1001380"/>
<dbReference type="EnsemblBacteria" id="BAA10870">
    <property type="protein sequence ID" value="BAA10870"/>
    <property type="gene ID" value="BAA10870"/>
</dbReference>
<dbReference type="KEGG" id="syn:slr0550"/>
<dbReference type="eggNOG" id="COG0329">
    <property type="taxonomic scope" value="Bacteria"/>
</dbReference>
<dbReference type="InParanoid" id="Q55513"/>
<dbReference type="PhylomeDB" id="Q55513"/>
<dbReference type="UniPathway" id="UPA00034">
    <property type="reaction ID" value="UER00017"/>
</dbReference>
<dbReference type="Proteomes" id="UP000001425">
    <property type="component" value="Chromosome"/>
</dbReference>
<dbReference type="GO" id="GO:0005829">
    <property type="term" value="C:cytosol"/>
    <property type="evidence" value="ECO:0000318"/>
    <property type="project" value="GO_Central"/>
</dbReference>
<dbReference type="GO" id="GO:0008840">
    <property type="term" value="F:4-hydroxy-tetrahydrodipicolinate synthase activity"/>
    <property type="evidence" value="ECO:0000318"/>
    <property type="project" value="GO_Central"/>
</dbReference>
<dbReference type="GO" id="GO:0019877">
    <property type="term" value="P:diaminopimelate biosynthetic process"/>
    <property type="evidence" value="ECO:0007669"/>
    <property type="project" value="UniProtKB-UniRule"/>
</dbReference>
<dbReference type="GO" id="GO:0009089">
    <property type="term" value="P:lysine biosynthetic process via diaminopimelate"/>
    <property type="evidence" value="ECO:0007669"/>
    <property type="project" value="UniProtKB-UniRule"/>
</dbReference>
<dbReference type="CDD" id="cd00950">
    <property type="entry name" value="DHDPS"/>
    <property type="match status" value="1"/>
</dbReference>
<dbReference type="Gene3D" id="3.20.20.70">
    <property type="entry name" value="Aldolase class I"/>
    <property type="match status" value="1"/>
</dbReference>
<dbReference type="HAMAP" id="MF_00418">
    <property type="entry name" value="DapA"/>
    <property type="match status" value="1"/>
</dbReference>
<dbReference type="InterPro" id="IPR013785">
    <property type="entry name" value="Aldolase_TIM"/>
</dbReference>
<dbReference type="InterPro" id="IPR005263">
    <property type="entry name" value="DapA"/>
</dbReference>
<dbReference type="InterPro" id="IPR002220">
    <property type="entry name" value="DapA-like"/>
</dbReference>
<dbReference type="InterPro" id="IPR020625">
    <property type="entry name" value="Schiff_base-form_aldolases_AS"/>
</dbReference>
<dbReference type="InterPro" id="IPR020624">
    <property type="entry name" value="Schiff_base-form_aldolases_CS"/>
</dbReference>
<dbReference type="NCBIfam" id="TIGR00674">
    <property type="entry name" value="dapA"/>
    <property type="match status" value="1"/>
</dbReference>
<dbReference type="PANTHER" id="PTHR12128:SF66">
    <property type="entry name" value="4-HYDROXY-2-OXOGLUTARATE ALDOLASE, MITOCHONDRIAL"/>
    <property type="match status" value="1"/>
</dbReference>
<dbReference type="PANTHER" id="PTHR12128">
    <property type="entry name" value="DIHYDRODIPICOLINATE SYNTHASE"/>
    <property type="match status" value="1"/>
</dbReference>
<dbReference type="Pfam" id="PF00701">
    <property type="entry name" value="DHDPS"/>
    <property type="match status" value="1"/>
</dbReference>
<dbReference type="PIRSF" id="PIRSF001365">
    <property type="entry name" value="DHDPS"/>
    <property type="match status" value="1"/>
</dbReference>
<dbReference type="PRINTS" id="PR00146">
    <property type="entry name" value="DHPICSNTHASE"/>
</dbReference>
<dbReference type="SMART" id="SM01130">
    <property type="entry name" value="DHDPS"/>
    <property type="match status" value="1"/>
</dbReference>
<dbReference type="SUPFAM" id="SSF51569">
    <property type="entry name" value="Aldolase"/>
    <property type="match status" value="1"/>
</dbReference>
<dbReference type="PROSITE" id="PS00665">
    <property type="entry name" value="DHDPS_1"/>
    <property type="match status" value="1"/>
</dbReference>
<dbReference type="PROSITE" id="PS00666">
    <property type="entry name" value="DHDPS_2"/>
    <property type="match status" value="1"/>
</dbReference>